<dbReference type="EMBL" id="AF040960">
    <property type="protein sequence ID" value="AAC40057.1"/>
    <property type="molecule type" value="mRNA"/>
</dbReference>
<dbReference type="CCDS" id="CCDS28922.1"/>
<dbReference type="SMR" id="O70300"/>
<dbReference type="FunCoup" id="O70300">
    <property type="interactions" value="522"/>
</dbReference>
<dbReference type="STRING" id="10090.ENSMUSP00000002740"/>
<dbReference type="PhosphoSitePlus" id="O70300"/>
<dbReference type="PaxDb" id="10090-ENSMUSP00000002740"/>
<dbReference type="AGR" id="MGI:1201684"/>
<dbReference type="MGI" id="MGI:1201684">
    <property type="gene designation" value="Pspn"/>
</dbReference>
<dbReference type="eggNOG" id="ENOG502S9IE">
    <property type="taxonomic scope" value="Eukaryota"/>
</dbReference>
<dbReference type="InParanoid" id="O70300"/>
<dbReference type="PhylomeDB" id="O70300"/>
<dbReference type="Reactome" id="R-MMU-5673001">
    <property type="pathway name" value="RAF/MAP kinase cascade"/>
</dbReference>
<dbReference type="Reactome" id="R-MMU-8853659">
    <property type="pathway name" value="RET signaling"/>
</dbReference>
<dbReference type="PRO" id="PR:O70300"/>
<dbReference type="Proteomes" id="UP000000589">
    <property type="component" value="Unplaced"/>
</dbReference>
<dbReference type="RNAct" id="O70300">
    <property type="molecule type" value="protein"/>
</dbReference>
<dbReference type="GO" id="GO:0005615">
    <property type="term" value="C:extracellular space"/>
    <property type="evidence" value="ECO:0000314"/>
    <property type="project" value="MGI"/>
</dbReference>
<dbReference type="GO" id="GO:0030116">
    <property type="term" value="F:glial cell-derived neurotrophic factor receptor binding"/>
    <property type="evidence" value="ECO:0007669"/>
    <property type="project" value="InterPro"/>
</dbReference>
<dbReference type="GO" id="GO:0008083">
    <property type="term" value="F:growth factor activity"/>
    <property type="evidence" value="ECO:0000250"/>
    <property type="project" value="UniProtKB"/>
</dbReference>
<dbReference type="GO" id="GO:0030971">
    <property type="term" value="F:receptor tyrosine kinase binding"/>
    <property type="evidence" value="ECO:0007669"/>
    <property type="project" value="InterPro"/>
</dbReference>
<dbReference type="GO" id="GO:0005102">
    <property type="term" value="F:signaling receptor binding"/>
    <property type="evidence" value="ECO:0000304"/>
    <property type="project" value="MGI"/>
</dbReference>
<dbReference type="GO" id="GO:0001658">
    <property type="term" value="P:branching involved in ureteric bud morphogenesis"/>
    <property type="evidence" value="ECO:0000314"/>
    <property type="project" value="MGI"/>
</dbReference>
<dbReference type="GO" id="GO:0035860">
    <property type="term" value="P:glial cell-derived neurotrophic factor receptor signaling pathway"/>
    <property type="evidence" value="ECO:0000250"/>
    <property type="project" value="UniProtKB"/>
</dbReference>
<dbReference type="CDD" id="cd19382">
    <property type="entry name" value="TGF_beta_Persephin"/>
    <property type="match status" value="1"/>
</dbReference>
<dbReference type="FunFam" id="2.10.90.10:FF:000040">
    <property type="entry name" value="Persephin"/>
    <property type="match status" value="1"/>
</dbReference>
<dbReference type="Gene3D" id="2.10.90.10">
    <property type="entry name" value="Cystine-knot cytokines"/>
    <property type="match status" value="1"/>
</dbReference>
<dbReference type="InterPro" id="IPR029034">
    <property type="entry name" value="Cystine-knot_cytokine"/>
</dbReference>
<dbReference type="InterPro" id="IPR043401">
    <property type="entry name" value="GDNF_fam"/>
</dbReference>
<dbReference type="InterPro" id="IPR001839">
    <property type="entry name" value="TGF-b_C"/>
</dbReference>
<dbReference type="PANTHER" id="PTHR12173">
    <property type="entry name" value="GDNF SUBFAMILY OF TGF-BETA FAMILY"/>
    <property type="match status" value="1"/>
</dbReference>
<dbReference type="PANTHER" id="PTHR12173:SF8">
    <property type="entry name" value="PERSEPHIN"/>
    <property type="match status" value="1"/>
</dbReference>
<dbReference type="Pfam" id="PF00019">
    <property type="entry name" value="TGF_beta"/>
    <property type="match status" value="1"/>
</dbReference>
<dbReference type="SUPFAM" id="SSF57501">
    <property type="entry name" value="Cystine-knot cytokines"/>
    <property type="match status" value="1"/>
</dbReference>
<dbReference type="PROSITE" id="PS51362">
    <property type="entry name" value="TGF_BETA_2"/>
    <property type="match status" value="1"/>
</dbReference>
<evidence type="ECO:0000250" key="1">
    <source>
        <dbReference type="UniProtKB" id="O60542"/>
    </source>
</evidence>
<evidence type="ECO:0000250" key="2">
    <source>
        <dbReference type="UniProtKB" id="Q5T4W7"/>
    </source>
</evidence>
<evidence type="ECO:0000255" key="3"/>
<evidence type="ECO:0000269" key="4">
    <source>
    </source>
</evidence>
<evidence type="ECO:0000303" key="5">
    <source>
    </source>
</evidence>
<evidence type="ECO:0000305" key="6"/>
<evidence type="ECO:0000312" key="7">
    <source>
        <dbReference type="MGI" id="MGI:1201684"/>
    </source>
</evidence>
<organism>
    <name type="scientific">Mus musculus</name>
    <name type="common">Mouse</name>
    <dbReference type="NCBI Taxonomy" id="10090"/>
    <lineage>
        <taxon>Eukaryota</taxon>
        <taxon>Metazoa</taxon>
        <taxon>Chordata</taxon>
        <taxon>Craniata</taxon>
        <taxon>Vertebrata</taxon>
        <taxon>Euteleostomi</taxon>
        <taxon>Mammalia</taxon>
        <taxon>Eutheria</taxon>
        <taxon>Euarchontoglires</taxon>
        <taxon>Glires</taxon>
        <taxon>Rodentia</taxon>
        <taxon>Myomorpha</taxon>
        <taxon>Muroidea</taxon>
        <taxon>Muridae</taxon>
        <taxon>Murinae</taxon>
        <taxon>Mus</taxon>
        <taxon>Mus</taxon>
    </lineage>
</organism>
<comment type="function">
    <text evidence="1">Growth factor that exhibits neurotrophic activity on mesencephalic dopaminergic and motor neurons. Acts by binding to its coreceptor, GFRA4, leading to autophosphorylation and activation of the RET receptor.</text>
</comment>
<comment type="subunit">
    <text evidence="1 2">Homodimer; disulfide-linked (By similarity). Interacts with GFRA4 coreceptor and RET: forms a 2:2:2 ternary complex composed of PSPN ligand, GFRA4 and RET receptor (By similarity).</text>
</comment>
<comment type="subcellular location">
    <subcellularLocation>
        <location evidence="1">Secreted</location>
    </subcellularLocation>
</comment>
<comment type="disruption phenotype">
    <text evidence="4">Mice show normal development and behavior, but are hypersensitive to focal cerebral ischemia or stroke.</text>
</comment>
<comment type="similarity">
    <text evidence="6">Belongs to the TGF-beta family. GDNF subfamily.</text>
</comment>
<gene>
    <name evidence="7" type="primary">Pspn</name>
</gene>
<feature type="signal peptide" evidence="3">
    <location>
        <begin position="1"/>
        <end position="21"/>
    </location>
</feature>
<feature type="chain" id="PRO_0000034015" description="Persephin">
    <location>
        <begin position="22"/>
        <end position="156"/>
    </location>
</feature>
<feature type="disulfide bond" evidence="2">
    <location>
        <begin position="66"/>
        <end position="124"/>
    </location>
</feature>
<feature type="disulfide bond" evidence="2">
    <location>
        <begin position="93"/>
        <end position="152"/>
    </location>
</feature>
<feature type="disulfide bond" evidence="2">
    <location>
        <begin position="97"/>
        <end position="154"/>
    </location>
</feature>
<feature type="disulfide bond" description="Interchain" evidence="2">
    <location>
        <position position="123"/>
    </location>
</feature>
<reference key="1">
    <citation type="journal article" date="1998" name="Neuron">
        <title>Persephin, a novel neurotrophic factor related to GDNF and neurturin.</title>
        <authorList>
            <person name="Milbrandt J."/>
            <person name="de Sauvage F.J."/>
            <person name="Fahrner T.J."/>
            <person name="Baloh R.H."/>
            <person name="Leitner M.L."/>
            <person name="Tansey M.G."/>
            <person name="Lampe P.A."/>
            <person name="Heuckeroth R.O."/>
            <person name="Kotzbauer P.T."/>
            <person name="Simburger K.S."/>
            <person name="Golden J.P."/>
            <person name="Davies J.A."/>
            <person name="Vejsada R."/>
            <person name="Kato A.C."/>
            <person name="Hynes M."/>
            <person name="Sherman D."/>
            <person name="Nishimura M."/>
            <person name="Wang L.-C."/>
            <person name="Vandlen R."/>
            <person name="Moffat B."/>
            <person name="Klein R.D."/>
            <person name="Poulsen K."/>
            <person name="Gray C."/>
            <person name="Garces A."/>
            <person name="Henderson C.E."/>
            <person name="Phillips H.S."/>
            <person name="Johnson E.M."/>
        </authorList>
    </citation>
    <scope>NUCLEOTIDE SEQUENCE [MRNA]</scope>
    <source>
        <strain>129/SvJ</strain>
    </source>
</reference>
<reference key="2">
    <citation type="journal article" date="2002" name="Proc. Natl. Acad. Sci. U.S.A.">
        <title>Effects of cerebral ischemia in mice deficient in Persephin.</title>
        <authorList>
            <person name="Tomac A.C."/>
            <person name="Agulnick A.D."/>
            <person name="Haughey N."/>
            <person name="Chang C.F."/>
            <person name="Zhang Y."/>
            <person name="Baeckman C."/>
            <person name="Morales M."/>
            <person name="Mattson M.P."/>
            <person name="Wang Y."/>
            <person name="Westphal H."/>
            <person name="Hoffer B.J."/>
        </authorList>
    </citation>
    <scope>DISRUPTION PHENOTYPE</scope>
</reference>
<accession>O70300</accession>
<keyword id="KW-1015">Disulfide bond</keyword>
<keyword id="KW-0339">Growth factor</keyword>
<keyword id="KW-1185">Reference proteome</keyword>
<keyword id="KW-0964">Secreted</keyword>
<keyword id="KW-0732">Signal</keyword>
<protein>
    <recommendedName>
        <fullName evidence="5">Persephin</fullName>
        <shortName evidence="5">PSP</shortName>
    </recommendedName>
</protein>
<proteinExistence type="evidence at transcript level"/>
<sequence>MAAGRLRILCLLLLSLHPSLGWVLDLQEASVADKLSFGKMAETRGTWTPHQGNNHVRLPRALAGSCRLWSLTLPVAELGLGYASEEKVIFRYCAGSCPQEARTQHSLVLARLRGRGRAHGRPCCQPTSYADVTFLDDQHHWQQLPQLSAAACGCGG</sequence>
<name>PSPN_MOUSE</name>